<sequence length="208" mass="23616">MSAKGGTIKDKWKMKKWYSIIAPKVFGEVSLGSTPAYDVTQTIGRRVETTLYDLTGDFSQVYVHLYFKIVSNEGDRLITRFVGHELSRDYLRSLIRRKSSKVNSVFDVTTKDGYVVRVKGLVLTTYKCHQSQKTAIRKIINETISKKASELTFDDFTQEVVFGRLANEIFEATKKIYPLRKAEIEKTKVLKVPENLGKQVESSSVSSG</sequence>
<comment type="similarity">
    <text evidence="1">Belongs to the eukaryotic ribosomal protein eS1 family.</text>
</comment>
<accession>C3NHD3</accession>
<reference key="1">
    <citation type="journal article" date="2009" name="Proc. Natl. Acad. Sci. U.S.A.">
        <title>Biogeography of the Sulfolobus islandicus pan-genome.</title>
        <authorList>
            <person name="Reno M.L."/>
            <person name="Held N.L."/>
            <person name="Fields C.J."/>
            <person name="Burke P.V."/>
            <person name="Whitaker R.J."/>
        </authorList>
    </citation>
    <scope>NUCLEOTIDE SEQUENCE [LARGE SCALE GENOMIC DNA]</scope>
    <source>
        <strain>Y.N.15.51 / Yellowstone #2</strain>
    </source>
</reference>
<evidence type="ECO:0000255" key="1">
    <source>
        <dbReference type="HAMAP-Rule" id="MF_00359"/>
    </source>
</evidence>
<evidence type="ECO:0000305" key="2"/>
<organism>
    <name type="scientific">Saccharolobus islandicus (strain Y.N.15.51 / Yellowstone #2)</name>
    <name type="common">Sulfolobus islandicus</name>
    <dbReference type="NCBI Taxonomy" id="419942"/>
    <lineage>
        <taxon>Archaea</taxon>
        <taxon>Thermoproteota</taxon>
        <taxon>Thermoprotei</taxon>
        <taxon>Sulfolobales</taxon>
        <taxon>Sulfolobaceae</taxon>
        <taxon>Saccharolobus</taxon>
    </lineage>
</organism>
<feature type="chain" id="PRO_1000205384" description="Small ribosomal subunit protein eS1">
    <location>
        <begin position="1"/>
        <end position="208"/>
    </location>
</feature>
<keyword id="KW-0687">Ribonucleoprotein</keyword>
<keyword id="KW-0689">Ribosomal protein</keyword>
<proteinExistence type="inferred from homology"/>
<protein>
    <recommendedName>
        <fullName evidence="1">Small ribosomal subunit protein eS1</fullName>
    </recommendedName>
    <alternativeName>
        <fullName evidence="2">30S ribosomal protein S3Ae</fullName>
    </alternativeName>
    <alternativeName>
        <fullName evidence="1">Ribosomal protein S1e</fullName>
    </alternativeName>
</protein>
<gene>
    <name evidence="1" type="primary">rps3ae</name>
    <name type="ordered locus">YN1551_1452</name>
</gene>
<name>RS3A_SACI1</name>
<dbReference type="EMBL" id="CP001404">
    <property type="protein sequence ID" value="ACP48543.1"/>
    <property type="molecule type" value="Genomic_DNA"/>
</dbReference>
<dbReference type="RefSeq" id="WP_012711394.1">
    <property type="nucleotide sequence ID" value="NC_012623.1"/>
</dbReference>
<dbReference type="SMR" id="C3NHD3"/>
<dbReference type="KEGG" id="sin:YN1551_1452"/>
<dbReference type="HOGENOM" id="CLU_062507_1_0_2"/>
<dbReference type="Proteomes" id="UP000006818">
    <property type="component" value="Chromosome"/>
</dbReference>
<dbReference type="GO" id="GO:1990904">
    <property type="term" value="C:ribonucleoprotein complex"/>
    <property type="evidence" value="ECO:0007669"/>
    <property type="project" value="UniProtKB-KW"/>
</dbReference>
<dbReference type="GO" id="GO:0005840">
    <property type="term" value="C:ribosome"/>
    <property type="evidence" value="ECO:0007669"/>
    <property type="project" value="UniProtKB-KW"/>
</dbReference>
<dbReference type="GO" id="GO:0003735">
    <property type="term" value="F:structural constituent of ribosome"/>
    <property type="evidence" value="ECO:0007669"/>
    <property type="project" value="InterPro"/>
</dbReference>
<dbReference type="GO" id="GO:0006412">
    <property type="term" value="P:translation"/>
    <property type="evidence" value="ECO:0007669"/>
    <property type="project" value="UniProtKB-UniRule"/>
</dbReference>
<dbReference type="HAMAP" id="MF_00359">
    <property type="entry name" value="Ribosomal_eS1"/>
    <property type="match status" value="1"/>
</dbReference>
<dbReference type="InterPro" id="IPR001593">
    <property type="entry name" value="Ribosomal_eS1"/>
</dbReference>
<dbReference type="InterPro" id="IPR030838">
    <property type="entry name" value="Ribosomal_eS1_arc"/>
</dbReference>
<dbReference type="NCBIfam" id="NF003142">
    <property type="entry name" value="PRK04057.1"/>
    <property type="match status" value="1"/>
</dbReference>
<dbReference type="PANTHER" id="PTHR11830">
    <property type="entry name" value="40S RIBOSOMAL PROTEIN S3A"/>
    <property type="match status" value="1"/>
</dbReference>
<dbReference type="Pfam" id="PF01015">
    <property type="entry name" value="Ribosomal_S3Ae"/>
    <property type="match status" value="1"/>
</dbReference>
<dbReference type="SMART" id="SM01397">
    <property type="entry name" value="Ribosomal_S3Ae"/>
    <property type="match status" value="1"/>
</dbReference>